<organism>
    <name type="scientific">Cervus elaphus</name>
    <name type="common">Red deer</name>
    <dbReference type="NCBI Taxonomy" id="9860"/>
    <lineage>
        <taxon>Eukaryota</taxon>
        <taxon>Metazoa</taxon>
        <taxon>Chordata</taxon>
        <taxon>Craniata</taxon>
        <taxon>Vertebrata</taxon>
        <taxon>Euteleostomi</taxon>
        <taxon>Mammalia</taxon>
        <taxon>Eutheria</taxon>
        <taxon>Laurasiatheria</taxon>
        <taxon>Artiodactyla</taxon>
        <taxon>Ruminantia</taxon>
        <taxon>Pecora</taxon>
        <taxon>Cervidae</taxon>
        <taxon>Cervinae</taxon>
        <taxon>Cervus</taxon>
    </lineage>
</organism>
<name>RNAS1_CEREL</name>
<comment type="function">
    <text evidence="1">Endonuclease that catalyzes the cleavage of RNA on the 3' side of pyrimidine nucleotides. Acts on single-stranded and double-stranded RNA (By similarity).</text>
</comment>
<comment type="catalytic activity">
    <reaction>
        <text>an [RNA] containing cytidine + H2O = an [RNA]-3'-cytidine-3'-phosphate + a 5'-hydroxy-ribonucleotide-3'-[RNA].</text>
        <dbReference type="EC" id="4.6.1.18"/>
    </reaction>
</comment>
<comment type="catalytic activity">
    <reaction>
        <text>an [RNA] containing uridine + H2O = an [RNA]-3'-uridine-3'-phosphate + a 5'-hydroxy-ribonucleotide-3'-[RNA].</text>
        <dbReference type="EC" id="4.6.1.18"/>
    </reaction>
</comment>
<comment type="subunit">
    <text evidence="1">Monomer. Interacts with and forms tight 1:1 complexes with RNH1. Dimerization of two such complexes may occur. Interaction with RNH1 inhibits this protein (By similarity).</text>
</comment>
<comment type="subcellular location">
    <subcellularLocation>
        <location>Secreted</location>
    </subcellularLocation>
</comment>
<comment type="tissue specificity">
    <text>Pancreas.</text>
</comment>
<comment type="similarity">
    <text evidence="3">Belongs to the pancreatic ribonuclease family.</text>
</comment>
<feature type="chain" id="PRO_0000057190" description="Ribonuclease pancreatic">
    <location>
        <begin position="1"/>
        <end position="124"/>
    </location>
</feature>
<feature type="region of interest" description="Disordered" evidence="2">
    <location>
        <begin position="1"/>
        <end position="24"/>
    </location>
</feature>
<feature type="compositionally biased region" description="Basic and acidic residues" evidence="2">
    <location>
        <begin position="1"/>
        <end position="13"/>
    </location>
</feature>
<feature type="active site" description="Proton acceptor" evidence="1">
    <location>
        <position position="12"/>
    </location>
</feature>
<feature type="active site" description="Proton donor" evidence="1">
    <location>
        <position position="119"/>
    </location>
</feature>
<feature type="binding site" evidence="1">
    <location>
        <position position="7"/>
    </location>
    <ligand>
        <name>substrate</name>
    </ligand>
</feature>
<feature type="binding site" evidence="1">
    <location>
        <position position="10"/>
    </location>
    <ligand>
        <name>substrate</name>
    </ligand>
</feature>
<feature type="binding site" evidence="1">
    <location>
        <begin position="41"/>
        <end position="45"/>
    </location>
    <ligand>
        <name>substrate</name>
    </ligand>
</feature>
<feature type="binding site" evidence="1">
    <location>
        <position position="66"/>
    </location>
    <ligand>
        <name>substrate</name>
    </ligand>
</feature>
<feature type="binding site" evidence="1">
    <location>
        <position position="85"/>
    </location>
    <ligand>
        <name>substrate</name>
    </ligand>
</feature>
<feature type="disulfide bond" evidence="1">
    <location>
        <begin position="26"/>
        <end position="84"/>
    </location>
</feature>
<feature type="disulfide bond" evidence="1">
    <location>
        <begin position="40"/>
        <end position="95"/>
    </location>
</feature>
<feature type="disulfide bond" evidence="1">
    <location>
        <begin position="58"/>
        <end position="110"/>
    </location>
</feature>
<feature type="disulfide bond" evidence="1">
    <location>
        <begin position="65"/>
        <end position="72"/>
    </location>
</feature>
<accession>P00663</accession>
<proteinExistence type="evidence at protein level"/>
<protein>
    <recommendedName>
        <fullName>Ribonuclease pancreatic</fullName>
        <ecNumber>4.6.1.18</ecNumber>
    </recommendedName>
    <alternativeName>
        <fullName>RNase 1</fullName>
    </alternativeName>
    <alternativeName>
        <fullName>RNase A</fullName>
    </alternativeName>
</protein>
<dbReference type="EC" id="4.6.1.18"/>
<dbReference type="PIR" id="B90613">
    <property type="entry name" value="NRDER"/>
</dbReference>
<dbReference type="SMR" id="P00663"/>
<dbReference type="GO" id="GO:0005576">
    <property type="term" value="C:extracellular region"/>
    <property type="evidence" value="ECO:0007669"/>
    <property type="project" value="UniProtKB-SubCell"/>
</dbReference>
<dbReference type="GO" id="GO:0016829">
    <property type="term" value="F:lyase activity"/>
    <property type="evidence" value="ECO:0007669"/>
    <property type="project" value="UniProtKB-KW"/>
</dbReference>
<dbReference type="GO" id="GO:0003676">
    <property type="term" value="F:nucleic acid binding"/>
    <property type="evidence" value="ECO:0007669"/>
    <property type="project" value="InterPro"/>
</dbReference>
<dbReference type="GO" id="GO:0004522">
    <property type="term" value="F:ribonuclease A activity"/>
    <property type="evidence" value="ECO:0007669"/>
    <property type="project" value="UniProtKB-EC"/>
</dbReference>
<dbReference type="GO" id="GO:0050830">
    <property type="term" value="P:defense response to Gram-positive bacterium"/>
    <property type="evidence" value="ECO:0007669"/>
    <property type="project" value="TreeGrafter"/>
</dbReference>
<dbReference type="CDD" id="cd06265">
    <property type="entry name" value="RNase_A_canonical"/>
    <property type="match status" value="1"/>
</dbReference>
<dbReference type="FunFam" id="3.10.130.10:FF:000001">
    <property type="entry name" value="Ribonuclease pancreatic"/>
    <property type="match status" value="1"/>
</dbReference>
<dbReference type="Gene3D" id="3.10.130.10">
    <property type="entry name" value="Ribonuclease A-like domain"/>
    <property type="match status" value="1"/>
</dbReference>
<dbReference type="InterPro" id="IPR001427">
    <property type="entry name" value="RNaseA"/>
</dbReference>
<dbReference type="InterPro" id="IPR036816">
    <property type="entry name" value="RNaseA-like_dom_sf"/>
</dbReference>
<dbReference type="InterPro" id="IPR023411">
    <property type="entry name" value="RNaseA_AS"/>
</dbReference>
<dbReference type="InterPro" id="IPR023412">
    <property type="entry name" value="RNaseA_domain"/>
</dbReference>
<dbReference type="PANTHER" id="PTHR11437">
    <property type="entry name" value="RIBONUCLEASE"/>
    <property type="match status" value="1"/>
</dbReference>
<dbReference type="PANTHER" id="PTHR11437:SF24">
    <property type="entry name" value="RIBONUCLEASE PANCREATIC"/>
    <property type="match status" value="1"/>
</dbReference>
<dbReference type="Pfam" id="PF00074">
    <property type="entry name" value="RnaseA"/>
    <property type="match status" value="1"/>
</dbReference>
<dbReference type="PRINTS" id="PR00794">
    <property type="entry name" value="RIBONUCLEASE"/>
</dbReference>
<dbReference type="SMART" id="SM00092">
    <property type="entry name" value="RNAse_Pc"/>
    <property type="match status" value="1"/>
</dbReference>
<dbReference type="SUPFAM" id="SSF54076">
    <property type="entry name" value="RNase A-like"/>
    <property type="match status" value="1"/>
</dbReference>
<dbReference type="PROSITE" id="PS00127">
    <property type="entry name" value="RNASE_PANCREATIC"/>
    <property type="match status" value="1"/>
</dbReference>
<evidence type="ECO:0000250" key="1"/>
<evidence type="ECO:0000256" key="2">
    <source>
        <dbReference type="SAM" id="MobiDB-lite"/>
    </source>
</evidence>
<evidence type="ECO:0000305" key="3"/>
<keyword id="KW-0903">Direct protein sequencing</keyword>
<keyword id="KW-1015">Disulfide bond</keyword>
<keyword id="KW-0255">Endonuclease</keyword>
<keyword id="KW-0378">Hydrolase</keyword>
<keyword id="KW-0456">Lyase</keyword>
<keyword id="KW-0540">Nuclease</keyword>
<keyword id="KW-0964">Secreted</keyword>
<reference key="1">
    <citation type="journal article" date="1973" name="Eur. J. Biochem.">
        <title>Amino-acid sequences of red-deer and roe-deer pancreatic ribonucleases.</title>
        <authorList>
            <person name="Zwiers H."/>
            <person name="Scheffer A.J."/>
            <person name="Beintema J.J."/>
        </authorList>
    </citation>
    <scope>PROTEIN SEQUENCE</scope>
    <source>
        <tissue>Pancreas</tissue>
    </source>
</reference>
<reference key="2">
    <citation type="journal article" date="1977" name="Biochim. Biophys. Acta">
        <title>Reinvestigation of the primary structures of red deer and roe deer pancreatic ribonuclease and proline sites in mammalian ribonucleases.</title>
        <authorList>
            <person name="Oosterhuis S."/>
            <person name="Welling G.W."/>
            <person name="Gaastra W."/>
            <person name="Beintema J.J."/>
        </authorList>
    </citation>
    <scope>SEQUENCE REVISION</scope>
</reference>
<sequence>KESAAAKFERQHMDPSTSSASSSNYCNQMMQSRKMTQDRCKPVNTFVHESLADVQAVCFQKNVACKNGQSNCYQSNSAMHITDCRESGNSKYPNCVYKATQAEKHIIVACEGNPYVPVHFDASV</sequence>
<gene>
    <name type="primary">RNASE1</name>
    <name type="synonym">RNS1</name>
</gene>